<sequence>MKVSMSLILITFWALVTIAKAYDPSPLQDFCVAIDDPKNGVFVNGKFCKDPKQAKAEDFFSSGLNQAGITNNKVKSNVTTVNVDQIPGLNTLGISLVRIDYAPYGQNPPHTHPRATEILVLVEGTLYVGFVSSNQDNNRLFAKVLNPGDVFVFPIGMIHFQVNIGKTPAVAFAGLSSQNAGVITIADTVFGSTPPINPDILAQAFQLDVNVVKDLEAKFKN</sequence>
<comment type="function">
    <text>May play a role in plant defense. Probably has no oxalate oxidase activity even if the active site is conserved.</text>
</comment>
<comment type="subunit">
    <text evidence="1">Oligomer (believed to be a pentamer but probably hexamer).</text>
</comment>
<comment type="subcellular location">
    <subcellularLocation>
        <location evidence="1">Secreted</location>
        <location evidence="1">Extracellular space</location>
        <location evidence="1">Apoplast</location>
    </subcellularLocation>
</comment>
<comment type="similarity">
    <text evidence="3">Belongs to the germin family.</text>
</comment>
<organism>
    <name type="scientific">Arabidopsis thaliana</name>
    <name type="common">Mouse-ear cress</name>
    <dbReference type="NCBI Taxonomy" id="3702"/>
    <lineage>
        <taxon>Eukaryota</taxon>
        <taxon>Viridiplantae</taxon>
        <taxon>Streptophyta</taxon>
        <taxon>Embryophyta</taxon>
        <taxon>Tracheophyta</taxon>
        <taxon>Spermatophyta</taxon>
        <taxon>Magnoliopsida</taxon>
        <taxon>eudicotyledons</taxon>
        <taxon>Gunneridae</taxon>
        <taxon>Pentapetalae</taxon>
        <taxon>rosids</taxon>
        <taxon>malvids</taxon>
        <taxon>Brassicales</taxon>
        <taxon>Brassicaceae</taxon>
        <taxon>Camelineae</taxon>
        <taxon>Arabidopsis</taxon>
    </lineage>
</organism>
<dbReference type="EMBL" id="AB016892">
    <property type="protein sequence ID" value="BAB10833.1"/>
    <property type="molecule type" value="Genomic_DNA"/>
</dbReference>
<dbReference type="EMBL" id="CP002688">
    <property type="protein sequence ID" value="AED94396.1"/>
    <property type="molecule type" value="Genomic_DNA"/>
</dbReference>
<dbReference type="RefSeq" id="NP_198728.1">
    <property type="nucleotide sequence ID" value="NM_123274.2"/>
</dbReference>
<dbReference type="SMR" id="Q9FIC9"/>
<dbReference type="FunCoup" id="Q9FIC9">
    <property type="interactions" value="100"/>
</dbReference>
<dbReference type="IntAct" id="Q9FIC9">
    <property type="interactions" value="1"/>
</dbReference>
<dbReference type="STRING" id="3702.Q9FIC9"/>
<dbReference type="GlyGen" id="Q9FIC9">
    <property type="glycosylation" value="1 site"/>
</dbReference>
<dbReference type="PaxDb" id="3702-AT5G39120.1"/>
<dbReference type="EnsemblPlants" id="AT5G39120.1">
    <property type="protein sequence ID" value="AT5G39120.1"/>
    <property type="gene ID" value="AT5G39120"/>
</dbReference>
<dbReference type="GeneID" id="833905"/>
<dbReference type="Gramene" id="AT5G39120.1">
    <property type="protein sequence ID" value="AT5G39120.1"/>
    <property type="gene ID" value="AT5G39120"/>
</dbReference>
<dbReference type="KEGG" id="ath:AT5G39120"/>
<dbReference type="Araport" id="AT5G39120"/>
<dbReference type="TAIR" id="AT5G39120"/>
<dbReference type="eggNOG" id="ENOG502QQ4A">
    <property type="taxonomic scope" value="Eukaryota"/>
</dbReference>
<dbReference type="HOGENOM" id="CLU_015790_0_0_1"/>
<dbReference type="InParanoid" id="Q9FIC9"/>
<dbReference type="OMA" id="PMQATAD"/>
<dbReference type="PhylomeDB" id="Q9FIC9"/>
<dbReference type="PRO" id="PR:Q9FIC9"/>
<dbReference type="Proteomes" id="UP000006548">
    <property type="component" value="Chromosome 5"/>
</dbReference>
<dbReference type="ExpressionAtlas" id="Q9FIC9">
    <property type="expression patterns" value="baseline and differential"/>
</dbReference>
<dbReference type="GO" id="GO:0048046">
    <property type="term" value="C:apoplast"/>
    <property type="evidence" value="ECO:0007669"/>
    <property type="project" value="UniProtKB-SubCell"/>
</dbReference>
<dbReference type="GO" id="GO:0030145">
    <property type="term" value="F:manganese ion binding"/>
    <property type="evidence" value="ECO:0007669"/>
    <property type="project" value="InterPro"/>
</dbReference>
<dbReference type="CDD" id="cd02241">
    <property type="entry name" value="cupin_OxOx"/>
    <property type="match status" value="1"/>
</dbReference>
<dbReference type="FunFam" id="2.60.120.10:FF:000005">
    <property type="entry name" value="Germin-like protein subfamily 1 member 8"/>
    <property type="match status" value="1"/>
</dbReference>
<dbReference type="Gene3D" id="2.60.120.10">
    <property type="entry name" value="Jelly Rolls"/>
    <property type="match status" value="1"/>
</dbReference>
<dbReference type="InterPro" id="IPR006045">
    <property type="entry name" value="Cupin_1"/>
</dbReference>
<dbReference type="InterPro" id="IPR001929">
    <property type="entry name" value="Germin"/>
</dbReference>
<dbReference type="InterPro" id="IPR019780">
    <property type="entry name" value="Germin_Mn-BS"/>
</dbReference>
<dbReference type="InterPro" id="IPR014710">
    <property type="entry name" value="RmlC-like_jellyroll"/>
</dbReference>
<dbReference type="InterPro" id="IPR011051">
    <property type="entry name" value="RmlC_Cupin_sf"/>
</dbReference>
<dbReference type="PANTHER" id="PTHR31238">
    <property type="entry name" value="GERMIN-LIKE PROTEIN SUBFAMILY 3 MEMBER 3"/>
    <property type="match status" value="1"/>
</dbReference>
<dbReference type="Pfam" id="PF00190">
    <property type="entry name" value="Cupin_1"/>
    <property type="match status" value="1"/>
</dbReference>
<dbReference type="PRINTS" id="PR00325">
    <property type="entry name" value="GERMIN"/>
</dbReference>
<dbReference type="SMART" id="SM00835">
    <property type="entry name" value="Cupin_1"/>
    <property type="match status" value="1"/>
</dbReference>
<dbReference type="SUPFAM" id="SSF51182">
    <property type="entry name" value="RmlC-like cupins"/>
    <property type="match status" value="1"/>
</dbReference>
<dbReference type="PROSITE" id="PS00725">
    <property type="entry name" value="GERMIN"/>
    <property type="match status" value="1"/>
</dbReference>
<reference key="1">
    <citation type="journal article" date="1998" name="DNA Res.">
        <title>Structural analysis of Arabidopsis thaliana chromosome 5. VIII. Sequence features of the regions of 1,081,958 bp covered by seventeen physically assigned P1 and TAC clones.</title>
        <authorList>
            <person name="Asamizu E."/>
            <person name="Sato S."/>
            <person name="Kaneko T."/>
            <person name="Nakamura Y."/>
            <person name="Kotani H."/>
            <person name="Miyajima N."/>
            <person name="Tabata S."/>
        </authorList>
    </citation>
    <scope>NUCLEOTIDE SEQUENCE [LARGE SCALE GENOMIC DNA]</scope>
    <source>
        <strain>cv. Columbia</strain>
    </source>
</reference>
<reference key="2">
    <citation type="journal article" date="2017" name="Plant J.">
        <title>Araport11: a complete reannotation of the Arabidopsis thaliana reference genome.</title>
        <authorList>
            <person name="Cheng C.Y."/>
            <person name="Krishnakumar V."/>
            <person name="Chan A.P."/>
            <person name="Thibaud-Nissen F."/>
            <person name="Schobel S."/>
            <person name="Town C.D."/>
        </authorList>
    </citation>
    <scope>GENOME REANNOTATION</scope>
    <source>
        <strain>cv. Columbia</strain>
    </source>
</reference>
<keyword id="KW-0052">Apoplast</keyword>
<keyword id="KW-1015">Disulfide bond</keyword>
<keyword id="KW-0325">Glycoprotein</keyword>
<keyword id="KW-0464">Manganese</keyword>
<keyword id="KW-0479">Metal-binding</keyword>
<keyword id="KW-1185">Reference proteome</keyword>
<keyword id="KW-0964">Secreted</keyword>
<keyword id="KW-0732">Signal</keyword>
<gene>
    <name type="ordered locus">At5g39120</name>
    <name type="ORF">MXF12.12</name>
    <name type="ORF">MXF12_130</name>
</gene>
<protein>
    <recommendedName>
        <fullName>Germin-like protein subfamily 1 member 15</fullName>
    </recommendedName>
</protein>
<feature type="signal peptide" evidence="2">
    <location>
        <begin position="1"/>
        <end position="21"/>
    </location>
</feature>
<feature type="chain" id="PRO_0000010815" description="Germin-like protein subfamily 1 member 15">
    <location>
        <begin position="22"/>
        <end position="221"/>
    </location>
</feature>
<feature type="domain" description="Cupin type-1" evidence="2">
    <location>
        <begin position="62"/>
        <end position="213"/>
    </location>
</feature>
<feature type="binding site" evidence="1">
    <location>
        <position position="110"/>
    </location>
    <ligand>
        <name>Mn(2+)</name>
        <dbReference type="ChEBI" id="CHEBI:29035"/>
    </ligand>
</feature>
<feature type="binding site" evidence="1">
    <location>
        <position position="112"/>
    </location>
    <ligand>
        <name>Mn(2+)</name>
        <dbReference type="ChEBI" id="CHEBI:29035"/>
    </ligand>
</feature>
<feature type="binding site" evidence="1">
    <location>
        <position position="117"/>
    </location>
    <ligand>
        <name>Mn(2+)</name>
        <dbReference type="ChEBI" id="CHEBI:29035"/>
    </ligand>
</feature>
<feature type="binding site" evidence="1">
    <location>
        <position position="159"/>
    </location>
    <ligand>
        <name>Mn(2+)</name>
        <dbReference type="ChEBI" id="CHEBI:29035"/>
    </ligand>
</feature>
<feature type="glycosylation site" description="N-linked (GlcNAc...) asparagine" evidence="2">
    <location>
        <position position="77"/>
    </location>
</feature>
<feature type="disulfide bond" evidence="1">
    <location>
        <begin position="31"/>
        <end position="48"/>
    </location>
</feature>
<name>GL115_ARATH</name>
<evidence type="ECO:0000250" key="1"/>
<evidence type="ECO:0000255" key="2"/>
<evidence type="ECO:0000305" key="3"/>
<proteinExistence type="evidence at transcript level"/>
<accession>Q9FIC9</accession>